<reference key="1">
    <citation type="journal article" date="2011" name="PLoS Genet.">
        <title>The evolution of host specialization in the vertebrate gut symbiont Lactobacillus reuteri.</title>
        <authorList>
            <person name="Frese S.A."/>
            <person name="Benson A.K."/>
            <person name="Tannock G.W."/>
            <person name="Loach D.M."/>
            <person name="Kim J."/>
            <person name="Zhang M."/>
            <person name="Oh P.L."/>
            <person name="Heng N.C."/>
            <person name="Patil P.B."/>
            <person name="Juge N."/>
            <person name="Mackenzie D.A."/>
            <person name="Pearson B.M."/>
            <person name="Lapidus A."/>
            <person name="Dalin E."/>
            <person name="Tice H."/>
            <person name="Goltsman E."/>
            <person name="Land M."/>
            <person name="Hauser L."/>
            <person name="Ivanova N."/>
            <person name="Kyrpides N.C."/>
            <person name="Walter J."/>
        </authorList>
    </citation>
    <scope>NUCLEOTIDE SEQUENCE [LARGE SCALE GENOMIC DNA]</scope>
    <source>
        <strain>DSM 20016</strain>
    </source>
</reference>
<proteinExistence type="inferred from homology"/>
<keyword id="KW-1185">Reference proteome</keyword>
<keyword id="KW-0687">Ribonucleoprotein</keyword>
<keyword id="KW-0689">Ribosomal protein</keyword>
<keyword id="KW-0694">RNA-binding</keyword>
<keyword id="KW-0699">rRNA-binding</keyword>
<name>RL24_LIMRD</name>
<sequence length="102" mass="10975">MFIKTGDKVRVIAGKDKGKEGTIKKVLASQNRVIVEGVNIVKKHQKPSNSNPNGGVIDTEAAINASNVMLIDPSTNEPTRVGYKFVDGKKVRVAKKSGKTLD</sequence>
<gene>
    <name evidence="1" type="primary">rplX</name>
    <name type="ordered locus">Lreu_1472</name>
</gene>
<accession>A5VLJ4</accession>
<evidence type="ECO:0000255" key="1">
    <source>
        <dbReference type="HAMAP-Rule" id="MF_01326"/>
    </source>
</evidence>
<evidence type="ECO:0000305" key="2"/>
<protein>
    <recommendedName>
        <fullName evidence="1">Large ribosomal subunit protein uL24</fullName>
    </recommendedName>
    <alternativeName>
        <fullName evidence="2">50S ribosomal protein L24</fullName>
    </alternativeName>
</protein>
<dbReference type="EMBL" id="CP000705">
    <property type="protein sequence ID" value="ABQ83718.1"/>
    <property type="molecule type" value="Genomic_DNA"/>
</dbReference>
<dbReference type="RefSeq" id="WP_003664549.1">
    <property type="nucleotide sequence ID" value="NZ_AZDD01000010.1"/>
</dbReference>
<dbReference type="SMR" id="A5VLJ4"/>
<dbReference type="STRING" id="557436.Lreu_1472"/>
<dbReference type="GeneID" id="77191468"/>
<dbReference type="KEGG" id="lre:Lreu_1472"/>
<dbReference type="PATRIC" id="fig|557436.17.peg.151"/>
<dbReference type="eggNOG" id="COG0198">
    <property type="taxonomic scope" value="Bacteria"/>
</dbReference>
<dbReference type="HOGENOM" id="CLU_093315_2_0_9"/>
<dbReference type="Proteomes" id="UP000001991">
    <property type="component" value="Chromosome"/>
</dbReference>
<dbReference type="GO" id="GO:1990904">
    <property type="term" value="C:ribonucleoprotein complex"/>
    <property type="evidence" value="ECO:0007669"/>
    <property type="project" value="UniProtKB-KW"/>
</dbReference>
<dbReference type="GO" id="GO:0005840">
    <property type="term" value="C:ribosome"/>
    <property type="evidence" value="ECO:0007669"/>
    <property type="project" value="UniProtKB-KW"/>
</dbReference>
<dbReference type="GO" id="GO:0019843">
    <property type="term" value="F:rRNA binding"/>
    <property type="evidence" value="ECO:0007669"/>
    <property type="project" value="UniProtKB-UniRule"/>
</dbReference>
<dbReference type="GO" id="GO:0003735">
    <property type="term" value="F:structural constituent of ribosome"/>
    <property type="evidence" value="ECO:0007669"/>
    <property type="project" value="InterPro"/>
</dbReference>
<dbReference type="GO" id="GO:0006412">
    <property type="term" value="P:translation"/>
    <property type="evidence" value="ECO:0007669"/>
    <property type="project" value="UniProtKB-UniRule"/>
</dbReference>
<dbReference type="CDD" id="cd06089">
    <property type="entry name" value="KOW_RPL26"/>
    <property type="match status" value="1"/>
</dbReference>
<dbReference type="FunFam" id="2.30.30.30:FF:000004">
    <property type="entry name" value="50S ribosomal protein L24"/>
    <property type="match status" value="1"/>
</dbReference>
<dbReference type="Gene3D" id="2.30.30.30">
    <property type="match status" value="1"/>
</dbReference>
<dbReference type="HAMAP" id="MF_01326_B">
    <property type="entry name" value="Ribosomal_uL24_B"/>
    <property type="match status" value="1"/>
</dbReference>
<dbReference type="InterPro" id="IPR005824">
    <property type="entry name" value="KOW"/>
</dbReference>
<dbReference type="InterPro" id="IPR014722">
    <property type="entry name" value="Rib_uL2_dom2"/>
</dbReference>
<dbReference type="InterPro" id="IPR003256">
    <property type="entry name" value="Ribosomal_uL24"/>
</dbReference>
<dbReference type="InterPro" id="IPR005825">
    <property type="entry name" value="Ribosomal_uL24_CS"/>
</dbReference>
<dbReference type="InterPro" id="IPR041988">
    <property type="entry name" value="Ribosomal_uL24_KOW"/>
</dbReference>
<dbReference type="InterPro" id="IPR008991">
    <property type="entry name" value="Translation_prot_SH3-like_sf"/>
</dbReference>
<dbReference type="NCBIfam" id="TIGR01079">
    <property type="entry name" value="rplX_bact"/>
    <property type="match status" value="1"/>
</dbReference>
<dbReference type="PANTHER" id="PTHR12903">
    <property type="entry name" value="MITOCHONDRIAL RIBOSOMAL PROTEIN L24"/>
    <property type="match status" value="1"/>
</dbReference>
<dbReference type="Pfam" id="PF00467">
    <property type="entry name" value="KOW"/>
    <property type="match status" value="1"/>
</dbReference>
<dbReference type="Pfam" id="PF17136">
    <property type="entry name" value="ribosomal_L24"/>
    <property type="match status" value="1"/>
</dbReference>
<dbReference type="SMART" id="SM00739">
    <property type="entry name" value="KOW"/>
    <property type="match status" value="1"/>
</dbReference>
<dbReference type="SUPFAM" id="SSF50104">
    <property type="entry name" value="Translation proteins SH3-like domain"/>
    <property type="match status" value="1"/>
</dbReference>
<dbReference type="PROSITE" id="PS01108">
    <property type="entry name" value="RIBOSOMAL_L24"/>
    <property type="match status" value="1"/>
</dbReference>
<comment type="function">
    <text evidence="1">One of two assembly initiator proteins, it binds directly to the 5'-end of the 23S rRNA, where it nucleates assembly of the 50S subunit.</text>
</comment>
<comment type="function">
    <text evidence="1">One of the proteins that surrounds the polypeptide exit tunnel on the outside of the subunit.</text>
</comment>
<comment type="subunit">
    <text evidence="1">Part of the 50S ribosomal subunit.</text>
</comment>
<comment type="similarity">
    <text evidence="1">Belongs to the universal ribosomal protein uL24 family.</text>
</comment>
<feature type="chain" id="PRO_1000067583" description="Large ribosomal subunit protein uL24">
    <location>
        <begin position="1"/>
        <end position="102"/>
    </location>
</feature>
<organism>
    <name type="scientific">Limosilactobacillus reuteri (strain DSM 20016)</name>
    <name type="common">Lactobacillus reuteri</name>
    <dbReference type="NCBI Taxonomy" id="557436"/>
    <lineage>
        <taxon>Bacteria</taxon>
        <taxon>Bacillati</taxon>
        <taxon>Bacillota</taxon>
        <taxon>Bacilli</taxon>
        <taxon>Lactobacillales</taxon>
        <taxon>Lactobacillaceae</taxon>
        <taxon>Limosilactobacillus</taxon>
    </lineage>
</organism>